<dbReference type="EC" id="3.1.26.3" evidence="1"/>
<dbReference type="EMBL" id="CP000302">
    <property type="protein sequence ID" value="ABE56045.1"/>
    <property type="molecule type" value="Genomic_DNA"/>
</dbReference>
<dbReference type="RefSeq" id="WP_011497195.1">
    <property type="nucleotide sequence ID" value="NC_007954.1"/>
</dbReference>
<dbReference type="SMR" id="Q12KI1"/>
<dbReference type="STRING" id="318161.Sden_2766"/>
<dbReference type="KEGG" id="sdn:Sden_2766"/>
<dbReference type="eggNOG" id="COG0571">
    <property type="taxonomic scope" value="Bacteria"/>
</dbReference>
<dbReference type="HOGENOM" id="CLU_000907_1_1_6"/>
<dbReference type="OrthoDB" id="9805026at2"/>
<dbReference type="Proteomes" id="UP000001982">
    <property type="component" value="Chromosome"/>
</dbReference>
<dbReference type="GO" id="GO:0005737">
    <property type="term" value="C:cytoplasm"/>
    <property type="evidence" value="ECO:0007669"/>
    <property type="project" value="UniProtKB-SubCell"/>
</dbReference>
<dbReference type="GO" id="GO:0003725">
    <property type="term" value="F:double-stranded RNA binding"/>
    <property type="evidence" value="ECO:0007669"/>
    <property type="project" value="TreeGrafter"/>
</dbReference>
<dbReference type="GO" id="GO:0046872">
    <property type="term" value="F:metal ion binding"/>
    <property type="evidence" value="ECO:0007669"/>
    <property type="project" value="UniProtKB-KW"/>
</dbReference>
<dbReference type="GO" id="GO:0004525">
    <property type="term" value="F:ribonuclease III activity"/>
    <property type="evidence" value="ECO:0007669"/>
    <property type="project" value="UniProtKB-UniRule"/>
</dbReference>
<dbReference type="GO" id="GO:0019843">
    <property type="term" value="F:rRNA binding"/>
    <property type="evidence" value="ECO:0007669"/>
    <property type="project" value="UniProtKB-KW"/>
</dbReference>
<dbReference type="GO" id="GO:0006397">
    <property type="term" value="P:mRNA processing"/>
    <property type="evidence" value="ECO:0007669"/>
    <property type="project" value="UniProtKB-UniRule"/>
</dbReference>
<dbReference type="GO" id="GO:0010468">
    <property type="term" value="P:regulation of gene expression"/>
    <property type="evidence" value="ECO:0007669"/>
    <property type="project" value="TreeGrafter"/>
</dbReference>
<dbReference type="GO" id="GO:0006364">
    <property type="term" value="P:rRNA processing"/>
    <property type="evidence" value="ECO:0007669"/>
    <property type="project" value="UniProtKB-UniRule"/>
</dbReference>
<dbReference type="GO" id="GO:0008033">
    <property type="term" value="P:tRNA processing"/>
    <property type="evidence" value="ECO:0007669"/>
    <property type="project" value="UniProtKB-KW"/>
</dbReference>
<dbReference type="CDD" id="cd10845">
    <property type="entry name" value="DSRM_RNAse_III_family"/>
    <property type="match status" value="1"/>
</dbReference>
<dbReference type="CDD" id="cd00593">
    <property type="entry name" value="RIBOc"/>
    <property type="match status" value="1"/>
</dbReference>
<dbReference type="FunFam" id="1.10.1520.10:FF:000001">
    <property type="entry name" value="Ribonuclease 3"/>
    <property type="match status" value="1"/>
</dbReference>
<dbReference type="FunFam" id="3.30.160.20:FF:000003">
    <property type="entry name" value="Ribonuclease 3"/>
    <property type="match status" value="1"/>
</dbReference>
<dbReference type="Gene3D" id="3.30.160.20">
    <property type="match status" value="1"/>
</dbReference>
<dbReference type="Gene3D" id="1.10.1520.10">
    <property type="entry name" value="Ribonuclease III domain"/>
    <property type="match status" value="1"/>
</dbReference>
<dbReference type="HAMAP" id="MF_00104">
    <property type="entry name" value="RNase_III"/>
    <property type="match status" value="1"/>
</dbReference>
<dbReference type="InterPro" id="IPR014720">
    <property type="entry name" value="dsRBD_dom"/>
</dbReference>
<dbReference type="InterPro" id="IPR011907">
    <property type="entry name" value="RNase_III"/>
</dbReference>
<dbReference type="InterPro" id="IPR000999">
    <property type="entry name" value="RNase_III_dom"/>
</dbReference>
<dbReference type="InterPro" id="IPR036389">
    <property type="entry name" value="RNase_III_sf"/>
</dbReference>
<dbReference type="NCBIfam" id="TIGR02191">
    <property type="entry name" value="RNaseIII"/>
    <property type="match status" value="1"/>
</dbReference>
<dbReference type="PANTHER" id="PTHR11207:SF0">
    <property type="entry name" value="RIBONUCLEASE 3"/>
    <property type="match status" value="1"/>
</dbReference>
<dbReference type="PANTHER" id="PTHR11207">
    <property type="entry name" value="RIBONUCLEASE III"/>
    <property type="match status" value="1"/>
</dbReference>
<dbReference type="Pfam" id="PF00035">
    <property type="entry name" value="dsrm"/>
    <property type="match status" value="1"/>
</dbReference>
<dbReference type="Pfam" id="PF14622">
    <property type="entry name" value="Ribonucleas_3_3"/>
    <property type="match status" value="1"/>
</dbReference>
<dbReference type="SMART" id="SM00358">
    <property type="entry name" value="DSRM"/>
    <property type="match status" value="1"/>
</dbReference>
<dbReference type="SMART" id="SM00535">
    <property type="entry name" value="RIBOc"/>
    <property type="match status" value="1"/>
</dbReference>
<dbReference type="SUPFAM" id="SSF54768">
    <property type="entry name" value="dsRNA-binding domain-like"/>
    <property type="match status" value="1"/>
</dbReference>
<dbReference type="SUPFAM" id="SSF69065">
    <property type="entry name" value="RNase III domain-like"/>
    <property type="match status" value="1"/>
</dbReference>
<dbReference type="PROSITE" id="PS50137">
    <property type="entry name" value="DS_RBD"/>
    <property type="match status" value="1"/>
</dbReference>
<dbReference type="PROSITE" id="PS00517">
    <property type="entry name" value="RNASE_3_1"/>
    <property type="match status" value="1"/>
</dbReference>
<dbReference type="PROSITE" id="PS50142">
    <property type="entry name" value="RNASE_3_2"/>
    <property type="match status" value="1"/>
</dbReference>
<protein>
    <recommendedName>
        <fullName evidence="1">Ribonuclease 3</fullName>
        <ecNumber evidence="1">3.1.26.3</ecNumber>
    </recommendedName>
    <alternativeName>
        <fullName evidence="1">Ribonuclease III</fullName>
        <shortName evidence="1">RNase III</shortName>
    </alternativeName>
</protein>
<gene>
    <name evidence="1" type="primary">rnc</name>
    <name type="ordered locus">Sden_2766</name>
</gene>
<proteinExistence type="inferred from homology"/>
<feature type="chain" id="PRO_1000075811" description="Ribonuclease 3">
    <location>
        <begin position="1"/>
        <end position="226"/>
    </location>
</feature>
<feature type="domain" description="RNase III" evidence="1">
    <location>
        <begin position="7"/>
        <end position="129"/>
    </location>
</feature>
<feature type="domain" description="DRBM" evidence="1">
    <location>
        <begin position="156"/>
        <end position="226"/>
    </location>
</feature>
<feature type="active site" evidence="1">
    <location>
        <position position="46"/>
    </location>
</feature>
<feature type="active site" evidence="1">
    <location>
        <position position="118"/>
    </location>
</feature>
<feature type="binding site" evidence="1">
    <location>
        <position position="42"/>
    </location>
    <ligand>
        <name>Mg(2+)</name>
        <dbReference type="ChEBI" id="CHEBI:18420"/>
    </ligand>
</feature>
<feature type="binding site" evidence="1">
    <location>
        <position position="115"/>
    </location>
    <ligand>
        <name>Mg(2+)</name>
        <dbReference type="ChEBI" id="CHEBI:18420"/>
    </ligand>
</feature>
<feature type="binding site" evidence="1">
    <location>
        <position position="118"/>
    </location>
    <ligand>
        <name>Mg(2+)</name>
        <dbReference type="ChEBI" id="CHEBI:18420"/>
    </ligand>
</feature>
<reference key="1">
    <citation type="submission" date="2006-03" db="EMBL/GenBank/DDBJ databases">
        <title>Complete sequence of Shewanella denitrificans OS217.</title>
        <authorList>
            <consortium name="US DOE Joint Genome Institute"/>
            <person name="Copeland A."/>
            <person name="Lucas S."/>
            <person name="Lapidus A."/>
            <person name="Barry K."/>
            <person name="Detter J.C."/>
            <person name="Glavina del Rio T."/>
            <person name="Hammon N."/>
            <person name="Israni S."/>
            <person name="Dalin E."/>
            <person name="Tice H."/>
            <person name="Pitluck S."/>
            <person name="Brettin T."/>
            <person name="Bruce D."/>
            <person name="Han C."/>
            <person name="Tapia R."/>
            <person name="Gilna P."/>
            <person name="Kiss H."/>
            <person name="Schmutz J."/>
            <person name="Larimer F."/>
            <person name="Land M."/>
            <person name="Hauser L."/>
            <person name="Kyrpides N."/>
            <person name="Lykidis A."/>
            <person name="Richardson P."/>
        </authorList>
    </citation>
    <scope>NUCLEOTIDE SEQUENCE [LARGE SCALE GENOMIC DNA]</scope>
    <source>
        <strain>OS217 / ATCC BAA-1090 / DSM 15013</strain>
    </source>
</reference>
<sequence>MEPVKNLARLSRTLGYEFTNQELLVQALTHRSAANKHNERLEFLGDSILSIVISDALYHQFPKATEGDLSRMRATLVKGETLTLIAKEFKLGDYLFLGPGELKSGGFRRESILADAVEAIIGAVYLDANMQACETLLLSWYKVRLDEIKPGINQKDPKTILQEYLQGYKKPLPDYQVVQVDGEAHDQTFTVECRIQDLDEVVTGVGSSRRKAEQLAAAQILELINK</sequence>
<comment type="function">
    <text evidence="1">Digests double-stranded RNA. Involved in the processing of primary rRNA transcript to yield the immediate precursors to the large and small rRNAs (23S and 16S). Processes some mRNAs, and tRNAs when they are encoded in the rRNA operon. Processes pre-crRNA and tracrRNA of type II CRISPR loci if present in the organism.</text>
</comment>
<comment type="catalytic activity">
    <reaction evidence="1">
        <text>Endonucleolytic cleavage to 5'-phosphomonoester.</text>
        <dbReference type="EC" id="3.1.26.3"/>
    </reaction>
</comment>
<comment type="cofactor">
    <cofactor evidence="1">
        <name>Mg(2+)</name>
        <dbReference type="ChEBI" id="CHEBI:18420"/>
    </cofactor>
</comment>
<comment type="subunit">
    <text evidence="1">Homodimer.</text>
</comment>
<comment type="subcellular location">
    <subcellularLocation>
        <location evidence="1">Cytoplasm</location>
    </subcellularLocation>
</comment>
<comment type="similarity">
    <text evidence="1">Belongs to the ribonuclease III family.</text>
</comment>
<evidence type="ECO:0000255" key="1">
    <source>
        <dbReference type="HAMAP-Rule" id="MF_00104"/>
    </source>
</evidence>
<accession>Q12KI1</accession>
<keyword id="KW-0963">Cytoplasm</keyword>
<keyword id="KW-0255">Endonuclease</keyword>
<keyword id="KW-0378">Hydrolase</keyword>
<keyword id="KW-0460">Magnesium</keyword>
<keyword id="KW-0479">Metal-binding</keyword>
<keyword id="KW-0507">mRNA processing</keyword>
<keyword id="KW-0540">Nuclease</keyword>
<keyword id="KW-1185">Reference proteome</keyword>
<keyword id="KW-0694">RNA-binding</keyword>
<keyword id="KW-0698">rRNA processing</keyword>
<keyword id="KW-0699">rRNA-binding</keyword>
<keyword id="KW-0819">tRNA processing</keyword>
<name>RNC_SHEDO</name>
<organism>
    <name type="scientific">Shewanella denitrificans (strain OS217 / ATCC BAA-1090 / DSM 15013)</name>
    <dbReference type="NCBI Taxonomy" id="318161"/>
    <lineage>
        <taxon>Bacteria</taxon>
        <taxon>Pseudomonadati</taxon>
        <taxon>Pseudomonadota</taxon>
        <taxon>Gammaproteobacteria</taxon>
        <taxon>Alteromonadales</taxon>
        <taxon>Shewanellaceae</taxon>
        <taxon>Shewanella</taxon>
    </lineage>
</organism>